<proteinExistence type="evidence at protein level"/>
<organism>
    <name type="scientific">Mycobacterium tuberculosis (strain ATCC 25618 / H37Rv)</name>
    <dbReference type="NCBI Taxonomy" id="83332"/>
    <lineage>
        <taxon>Bacteria</taxon>
        <taxon>Bacillati</taxon>
        <taxon>Actinomycetota</taxon>
        <taxon>Actinomycetes</taxon>
        <taxon>Mycobacteriales</taxon>
        <taxon>Mycobacteriaceae</taxon>
        <taxon>Mycobacterium</taxon>
        <taxon>Mycobacterium tuberculosis complex</taxon>
    </lineage>
</organism>
<protein>
    <recommendedName>
        <fullName evidence="1">Exodeoxyribonuclease 7 small subunit</fullName>
        <ecNumber evidence="1">3.1.11.6</ecNumber>
    </recommendedName>
    <alternativeName>
        <fullName evidence="1">Exodeoxyribonuclease VII small subunit</fullName>
        <shortName evidence="1">Exonuclease VII small subunit</shortName>
    </alternativeName>
</protein>
<feature type="chain" id="PRO_0000206975" description="Exodeoxyribonuclease 7 small subunit">
    <location>
        <begin position="1"/>
        <end position="85"/>
    </location>
</feature>
<sequence>MVCDPNGDDTGRTHATVPVSQLGYEACRDELMEVVRLLEQGGLDLDASLRLWERGEQLAKRCEEHLAGARQRVSDVLAGDEAQNG</sequence>
<reference key="1">
    <citation type="journal article" date="1998" name="Nature">
        <title>Deciphering the biology of Mycobacterium tuberculosis from the complete genome sequence.</title>
        <authorList>
            <person name="Cole S.T."/>
            <person name="Brosch R."/>
            <person name="Parkhill J."/>
            <person name="Garnier T."/>
            <person name="Churcher C.M."/>
            <person name="Harris D.E."/>
            <person name="Gordon S.V."/>
            <person name="Eiglmeier K."/>
            <person name="Gas S."/>
            <person name="Barry C.E. III"/>
            <person name="Tekaia F."/>
            <person name="Badcock K."/>
            <person name="Basham D."/>
            <person name="Brown D."/>
            <person name="Chillingworth T."/>
            <person name="Connor R."/>
            <person name="Davies R.M."/>
            <person name="Devlin K."/>
            <person name="Feltwell T."/>
            <person name="Gentles S."/>
            <person name="Hamlin N."/>
            <person name="Holroyd S."/>
            <person name="Hornsby T."/>
            <person name="Jagels K."/>
            <person name="Krogh A."/>
            <person name="McLean J."/>
            <person name="Moule S."/>
            <person name="Murphy L.D."/>
            <person name="Oliver S."/>
            <person name="Osborne J."/>
            <person name="Quail M.A."/>
            <person name="Rajandream M.A."/>
            <person name="Rogers J."/>
            <person name="Rutter S."/>
            <person name="Seeger K."/>
            <person name="Skelton S."/>
            <person name="Squares S."/>
            <person name="Squares R."/>
            <person name="Sulston J.E."/>
            <person name="Taylor K."/>
            <person name="Whitehead S."/>
            <person name="Barrell B.G."/>
        </authorList>
    </citation>
    <scope>NUCLEOTIDE SEQUENCE [LARGE SCALE GENOMIC DNA]</scope>
    <source>
        <strain>ATCC 25618 / H37Rv</strain>
    </source>
</reference>
<reference key="2">
    <citation type="journal article" date="2011" name="Mol. Cell. Proteomics">
        <title>Proteogenomic analysis of Mycobacterium tuberculosis by high resolution mass spectrometry.</title>
        <authorList>
            <person name="Kelkar D.S."/>
            <person name="Kumar D."/>
            <person name="Kumar P."/>
            <person name="Balakrishnan L."/>
            <person name="Muthusamy B."/>
            <person name="Yadav A.K."/>
            <person name="Shrivastava P."/>
            <person name="Marimuthu A."/>
            <person name="Anand S."/>
            <person name="Sundaram H."/>
            <person name="Kingsbury R."/>
            <person name="Harsha H.C."/>
            <person name="Nair B."/>
            <person name="Prasad T.S."/>
            <person name="Chauhan D.S."/>
            <person name="Katoch K."/>
            <person name="Katoch V.M."/>
            <person name="Kumar P."/>
            <person name="Chaerkady R."/>
            <person name="Ramachandran S."/>
            <person name="Dash D."/>
            <person name="Pandey A."/>
        </authorList>
    </citation>
    <scope>IDENTIFICATION BY MASS SPECTROMETRY [LARGE SCALE ANALYSIS]</scope>
    <source>
        <strain>ATCC 25618 / H37Rv</strain>
    </source>
</reference>
<comment type="function">
    <text evidence="1">Bidirectionally degrades single-stranded DNA into large acid-insoluble oligonucleotides, which are then degraded further into small acid-soluble oligonucleotides.</text>
</comment>
<comment type="catalytic activity">
    <reaction evidence="1">
        <text>Exonucleolytic cleavage in either 5'- to 3'- or 3'- to 5'-direction to yield nucleoside 5'-phosphates.</text>
        <dbReference type="EC" id="3.1.11.6"/>
    </reaction>
</comment>
<comment type="subunit">
    <text evidence="1">Heterooligomer composed of large and small subunits.</text>
</comment>
<comment type="subcellular location">
    <subcellularLocation>
        <location evidence="1">Cytoplasm</location>
    </subcellularLocation>
</comment>
<comment type="similarity">
    <text evidence="1 2">Belongs to the XseB family.</text>
</comment>
<gene>
    <name evidence="1" type="primary">xseB</name>
    <name type="ordered locus">Rv1107c</name>
    <name type="ORF">MTV017.60c</name>
</gene>
<evidence type="ECO:0000255" key="1">
    <source>
        <dbReference type="HAMAP-Rule" id="MF_00337"/>
    </source>
</evidence>
<evidence type="ECO:0000305" key="2"/>
<dbReference type="EC" id="3.1.11.6" evidence="1"/>
<dbReference type="EMBL" id="AL123456">
    <property type="protein sequence ID" value="CCP43860.1"/>
    <property type="molecule type" value="Genomic_DNA"/>
</dbReference>
<dbReference type="PIR" id="A70898">
    <property type="entry name" value="A70898"/>
</dbReference>
<dbReference type="RefSeq" id="NP_215623.1">
    <property type="nucleotide sequence ID" value="NC_000962.3"/>
</dbReference>
<dbReference type="RefSeq" id="WP_003405844.1">
    <property type="nucleotide sequence ID" value="NZ_NVQJ01000021.1"/>
</dbReference>
<dbReference type="SMR" id="P9WF29"/>
<dbReference type="FunCoup" id="P9WF29">
    <property type="interactions" value="2"/>
</dbReference>
<dbReference type="STRING" id="83332.Rv1107c"/>
<dbReference type="PaxDb" id="83332-Rv1107c"/>
<dbReference type="DNASU" id="886005"/>
<dbReference type="GeneID" id="886005"/>
<dbReference type="KEGG" id="mtu:Rv1107c"/>
<dbReference type="KEGG" id="mtv:RVBD_1107c"/>
<dbReference type="TubercuList" id="Rv1107c"/>
<dbReference type="eggNOG" id="COG1722">
    <property type="taxonomic scope" value="Bacteria"/>
</dbReference>
<dbReference type="InParanoid" id="P9WF29"/>
<dbReference type="OrthoDB" id="5244334at2"/>
<dbReference type="PhylomeDB" id="P9WF29"/>
<dbReference type="Proteomes" id="UP000001584">
    <property type="component" value="Chromosome"/>
</dbReference>
<dbReference type="GO" id="GO:0005829">
    <property type="term" value="C:cytosol"/>
    <property type="evidence" value="ECO:0000318"/>
    <property type="project" value="GO_Central"/>
</dbReference>
<dbReference type="GO" id="GO:0009318">
    <property type="term" value="C:exodeoxyribonuclease VII complex"/>
    <property type="evidence" value="ECO:0007669"/>
    <property type="project" value="InterPro"/>
</dbReference>
<dbReference type="GO" id="GO:0008855">
    <property type="term" value="F:exodeoxyribonuclease VII activity"/>
    <property type="evidence" value="ECO:0000318"/>
    <property type="project" value="GO_Central"/>
</dbReference>
<dbReference type="GO" id="GO:0006308">
    <property type="term" value="P:DNA catabolic process"/>
    <property type="evidence" value="ECO:0007669"/>
    <property type="project" value="UniProtKB-UniRule"/>
</dbReference>
<dbReference type="FunFam" id="1.10.287.1040:FF:000004">
    <property type="entry name" value="Exodeoxyribonuclease 7 small subunit"/>
    <property type="match status" value="1"/>
</dbReference>
<dbReference type="Gene3D" id="1.10.287.1040">
    <property type="entry name" value="Exonuclease VII, small subunit"/>
    <property type="match status" value="1"/>
</dbReference>
<dbReference type="HAMAP" id="MF_00337">
    <property type="entry name" value="Exonuc_7_S"/>
    <property type="match status" value="1"/>
</dbReference>
<dbReference type="InterPro" id="IPR003761">
    <property type="entry name" value="Exonuc_VII_S"/>
</dbReference>
<dbReference type="InterPro" id="IPR037004">
    <property type="entry name" value="Exonuc_VII_ssu_sf"/>
</dbReference>
<dbReference type="NCBIfam" id="NF002139">
    <property type="entry name" value="PRK00977.1-3"/>
    <property type="match status" value="1"/>
</dbReference>
<dbReference type="NCBIfam" id="TIGR01280">
    <property type="entry name" value="xseB"/>
    <property type="match status" value="1"/>
</dbReference>
<dbReference type="PANTHER" id="PTHR34137">
    <property type="entry name" value="EXODEOXYRIBONUCLEASE 7 SMALL SUBUNIT"/>
    <property type="match status" value="1"/>
</dbReference>
<dbReference type="PANTHER" id="PTHR34137:SF1">
    <property type="entry name" value="EXODEOXYRIBONUCLEASE 7 SMALL SUBUNIT"/>
    <property type="match status" value="1"/>
</dbReference>
<dbReference type="Pfam" id="PF02609">
    <property type="entry name" value="Exonuc_VII_S"/>
    <property type="match status" value="1"/>
</dbReference>
<dbReference type="PIRSF" id="PIRSF006488">
    <property type="entry name" value="Exonuc_VII_S"/>
    <property type="match status" value="1"/>
</dbReference>
<dbReference type="SUPFAM" id="SSF116842">
    <property type="entry name" value="XseB-like"/>
    <property type="match status" value="1"/>
</dbReference>
<name>EX7S_MYCTU</name>
<keyword id="KW-0963">Cytoplasm</keyword>
<keyword id="KW-0269">Exonuclease</keyword>
<keyword id="KW-0378">Hydrolase</keyword>
<keyword id="KW-0540">Nuclease</keyword>
<keyword id="KW-1185">Reference proteome</keyword>
<accession>P9WF29</accession>
<accession>L0T5S4</accession>
<accession>O53455</accession>
<accession>P67456</accession>